<dbReference type="EMBL" id="AB179636">
    <property type="protein sequence ID" value="BAD51414.1"/>
    <property type="molecule type" value="Genomic_RNA"/>
</dbReference>
<dbReference type="KEGG" id="vg:6334546"/>
<dbReference type="Proteomes" id="UP000006719">
    <property type="component" value="Genome"/>
</dbReference>
<keyword id="KW-0449">Lipoprotein</keyword>
<keyword id="KW-0519">Myristate</keyword>
<keyword id="KW-1185">Reference proteome</keyword>
<sequence>MGNSYSTSQQEYYITGSSNQLTPTTTTRAHSSGTLKAVAELPIGMNPSKVEIDSISYTDFLIDDIFDEEHDGLVDWIGRMVQKNSRIKGVVHITDKVISYVSKAAQFAKSFIGANKLAPDLEVSDCIDSLEAFAKAFSMFVQTHAPRDTSDAKYHGHDYGDPIDSYFDDINETYTKWASDSRGKLITGATIDVSAGALIPLLIAASQIIALSSKIGLKGQADIFGSTIECNSYHVLPGQTQLARIGKILKANESLQPRVIDTIKAHGHNLGLMTNVKGHDHHSYFSAPTLVSDIVENGPLKGIHPMKIIRHRANIVMQNRHNYSCDLLTLPLDNWNINTAPWMLRHFETEAMTIFDVRPVPSKLIQYTTASIFPTATKATIPGVAGAGATLITVYPTIYSLPPFFSKFNGNIIHRYSYIISYVREETYVFNINDVYAGVVVSRSDIDSLFITGKCVVFSAPRTSQNLTIHTIRVSGVVSFHDFKPIVPSTTNVSEILFEKQHGFVPAFIVKDSSLTPTSDASAAISIVGSHTYFHLSSGSLPINDYTVNPSDGSSTKVKNFLDAIALLPFSEMALPFSIDTLWREYSSGVVAYLDMTIFNDEFFHNSHPIICLSVIDYLKTNTSGFYYYNDLLQPAWYIPSNVRRVLRYMYAGIRLWLINDKRQNPLLGLTFKGDNARTLKYFVGLLVSCAHGLSMEYPTMDSEYDGRKQWTQIASLAVG</sequence>
<name>VP4_MYRV9</name>
<proteinExistence type="inferred from homology"/>
<protein>
    <recommendedName>
        <fullName>Uncharacterized protein VP4</fullName>
    </recommendedName>
</protein>
<gene>
    <name type="primary">S4</name>
</gene>
<evidence type="ECO:0000255" key="1"/>
<organism>
    <name type="scientific">Cryphonectria parasitica mycoreovirus 1 (strain 9B21)</name>
    <name type="common">CpMYRV-1</name>
    <dbReference type="NCBI Taxonomy" id="230407"/>
    <lineage>
        <taxon>Viruses</taxon>
        <taxon>Riboviria</taxon>
        <taxon>Orthornavirae</taxon>
        <taxon>Duplornaviricota</taxon>
        <taxon>Resentoviricetes</taxon>
        <taxon>Reovirales</taxon>
        <taxon>Spinareoviridae</taxon>
        <taxon>Mycoreovirus</taxon>
        <taxon>Mycoreovirus 1</taxon>
    </lineage>
</organism>
<organismHost>
    <name type="scientific">Cryphonectria parasitica</name>
    <name type="common">Chestnut blight fungus</name>
    <name type="synonym">Endothia parasitica</name>
    <dbReference type="NCBI Taxonomy" id="5116"/>
</organismHost>
<accession>Q65YV2</accession>
<feature type="initiator methionine" description="Removed" evidence="1">
    <location>
        <position position="1"/>
    </location>
</feature>
<feature type="chain" id="PRO_0000403426" description="Uncharacterized protein VP4">
    <location>
        <begin position="2"/>
        <end position="720"/>
    </location>
</feature>
<feature type="lipid moiety-binding region" description="N-myristoyl glycine; by host" evidence="1">
    <location>
        <position position="2"/>
    </location>
</feature>
<reference key="1">
    <citation type="journal article" date="2004" name="J. Gen. Virol.">
        <title>Complete genome sequence of Mycoreovirus-1/Cp9B21, a member of a novel genus within the family Reoviridae, isolated from the chestnut blight fungus Cryphonectria parasitica.</title>
        <authorList>
            <person name="Suzuki N."/>
            <person name="Supyani S."/>
            <person name="Maruyama K."/>
            <person name="Hillman B.I."/>
        </authorList>
    </citation>
    <scope>NUCLEOTIDE SEQUENCE [GENOMIC RNA]</scope>
</reference>